<dbReference type="EC" id="1.1.1.25" evidence="1"/>
<dbReference type="EMBL" id="AL590842">
    <property type="protein sequence ID" value="CAL18930.1"/>
    <property type="molecule type" value="Genomic_DNA"/>
</dbReference>
<dbReference type="EMBL" id="AE009952">
    <property type="protein sequence ID" value="AAM87572.1"/>
    <property type="molecule type" value="Genomic_DNA"/>
</dbReference>
<dbReference type="EMBL" id="AE017042">
    <property type="protein sequence ID" value="AAS60521.1"/>
    <property type="molecule type" value="Genomic_DNA"/>
</dbReference>
<dbReference type="PIR" id="AH0030">
    <property type="entry name" value="AH0030"/>
</dbReference>
<dbReference type="RefSeq" id="WP_002209026.1">
    <property type="nucleotide sequence ID" value="NZ_WUCM01000078.1"/>
</dbReference>
<dbReference type="RefSeq" id="YP_002345328.1">
    <property type="nucleotide sequence ID" value="NC_003143.1"/>
</dbReference>
<dbReference type="SMR" id="Q8ZJ74"/>
<dbReference type="IntAct" id="Q8ZJ74">
    <property type="interactions" value="3"/>
</dbReference>
<dbReference type="STRING" id="214092.YPO0246"/>
<dbReference type="PaxDb" id="214092-YPO0246"/>
<dbReference type="DNASU" id="1148975"/>
<dbReference type="EnsemblBacteria" id="AAS60521">
    <property type="protein sequence ID" value="AAS60521"/>
    <property type="gene ID" value="YP_0245"/>
</dbReference>
<dbReference type="GeneID" id="57974357"/>
<dbReference type="KEGG" id="ype:YPO0246"/>
<dbReference type="KEGG" id="ypk:y4028"/>
<dbReference type="KEGG" id="ypm:YP_0245"/>
<dbReference type="PATRIC" id="fig|214092.21.peg.475"/>
<dbReference type="eggNOG" id="COG0169">
    <property type="taxonomic scope" value="Bacteria"/>
</dbReference>
<dbReference type="HOGENOM" id="CLU_044063_2_1_6"/>
<dbReference type="OMA" id="FGNPIKH"/>
<dbReference type="OrthoDB" id="9776868at2"/>
<dbReference type="UniPathway" id="UPA00053">
    <property type="reaction ID" value="UER00087"/>
</dbReference>
<dbReference type="Proteomes" id="UP000000815">
    <property type="component" value="Chromosome"/>
</dbReference>
<dbReference type="Proteomes" id="UP000001019">
    <property type="component" value="Chromosome"/>
</dbReference>
<dbReference type="Proteomes" id="UP000002490">
    <property type="component" value="Chromosome"/>
</dbReference>
<dbReference type="GO" id="GO:0005829">
    <property type="term" value="C:cytosol"/>
    <property type="evidence" value="ECO:0000318"/>
    <property type="project" value="GO_Central"/>
</dbReference>
<dbReference type="GO" id="GO:0050661">
    <property type="term" value="F:NADP binding"/>
    <property type="evidence" value="ECO:0000318"/>
    <property type="project" value="GO_Central"/>
</dbReference>
<dbReference type="GO" id="GO:0004764">
    <property type="term" value="F:shikimate 3-dehydrogenase (NADP+) activity"/>
    <property type="evidence" value="ECO:0000318"/>
    <property type="project" value="GO_Central"/>
</dbReference>
<dbReference type="GO" id="GO:0008652">
    <property type="term" value="P:amino acid biosynthetic process"/>
    <property type="evidence" value="ECO:0007669"/>
    <property type="project" value="UniProtKB-KW"/>
</dbReference>
<dbReference type="GO" id="GO:0009073">
    <property type="term" value="P:aromatic amino acid family biosynthetic process"/>
    <property type="evidence" value="ECO:0007669"/>
    <property type="project" value="UniProtKB-KW"/>
</dbReference>
<dbReference type="GO" id="GO:0009423">
    <property type="term" value="P:chorismate biosynthetic process"/>
    <property type="evidence" value="ECO:0000318"/>
    <property type="project" value="GO_Central"/>
</dbReference>
<dbReference type="GO" id="GO:0019632">
    <property type="term" value="P:shikimate metabolic process"/>
    <property type="evidence" value="ECO:0000318"/>
    <property type="project" value="GO_Central"/>
</dbReference>
<dbReference type="CDD" id="cd01065">
    <property type="entry name" value="NAD_bind_Shikimate_DH"/>
    <property type="match status" value="1"/>
</dbReference>
<dbReference type="FunFam" id="3.40.50.10860:FF:000006">
    <property type="entry name" value="Shikimate dehydrogenase (NADP(+))"/>
    <property type="match status" value="1"/>
</dbReference>
<dbReference type="FunFam" id="3.40.50.720:FF:000104">
    <property type="entry name" value="Shikimate dehydrogenase (NADP(+))"/>
    <property type="match status" value="1"/>
</dbReference>
<dbReference type="Gene3D" id="3.40.50.10860">
    <property type="entry name" value="Leucine Dehydrogenase, chain A, domain 1"/>
    <property type="match status" value="1"/>
</dbReference>
<dbReference type="Gene3D" id="3.40.50.720">
    <property type="entry name" value="NAD(P)-binding Rossmann-like Domain"/>
    <property type="match status" value="1"/>
</dbReference>
<dbReference type="HAMAP" id="MF_00222">
    <property type="entry name" value="Shikimate_DH_AroE"/>
    <property type="match status" value="1"/>
</dbReference>
<dbReference type="InterPro" id="IPR046346">
    <property type="entry name" value="Aminoacid_DH-like_N_sf"/>
</dbReference>
<dbReference type="InterPro" id="IPR036291">
    <property type="entry name" value="NAD(P)-bd_dom_sf"/>
</dbReference>
<dbReference type="InterPro" id="IPR041121">
    <property type="entry name" value="SDH_C"/>
</dbReference>
<dbReference type="InterPro" id="IPR011342">
    <property type="entry name" value="Shikimate_DH"/>
</dbReference>
<dbReference type="InterPro" id="IPR013708">
    <property type="entry name" value="Shikimate_DH-bd_N"/>
</dbReference>
<dbReference type="InterPro" id="IPR022893">
    <property type="entry name" value="Shikimate_DH_fam"/>
</dbReference>
<dbReference type="InterPro" id="IPR006151">
    <property type="entry name" value="Shikm_DH/Glu-tRNA_Rdtase"/>
</dbReference>
<dbReference type="NCBIfam" id="TIGR00507">
    <property type="entry name" value="aroE"/>
    <property type="match status" value="1"/>
</dbReference>
<dbReference type="NCBIfam" id="NF001310">
    <property type="entry name" value="PRK00258.1-2"/>
    <property type="match status" value="1"/>
</dbReference>
<dbReference type="PANTHER" id="PTHR21089:SF1">
    <property type="entry name" value="BIFUNCTIONAL 3-DEHYDROQUINATE DEHYDRATASE_SHIKIMATE DEHYDROGENASE, CHLOROPLASTIC"/>
    <property type="match status" value="1"/>
</dbReference>
<dbReference type="PANTHER" id="PTHR21089">
    <property type="entry name" value="SHIKIMATE DEHYDROGENASE"/>
    <property type="match status" value="1"/>
</dbReference>
<dbReference type="Pfam" id="PF18317">
    <property type="entry name" value="SDH_C"/>
    <property type="match status" value="1"/>
</dbReference>
<dbReference type="Pfam" id="PF01488">
    <property type="entry name" value="Shikimate_DH"/>
    <property type="match status" value="1"/>
</dbReference>
<dbReference type="Pfam" id="PF08501">
    <property type="entry name" value="Shikimate_dh_N"/>
    <property type="match status" value="1"/>
</dbReference>
<dbReference type="SUPFAM" id="SSF53223">
    <property type="entry name" value="Aminoacid dehydrogenase-like, N-terminal domain"/>
    <property type="match status" value="1"/>
</dbReference>
<dbReference type="SUPFAM" id="SSF51735">
    <property type="entry name" value="NAD(P)-binding Rossmann-fold domains"/>
    <property type="match status" value="1"/>
</dbReference>
<accession>Q8ZJ74</accession>
<accession>Q0WK60</accession>
<gene>
    <name evidence="1" type="primary">aroE</name>
    <name type="ordered locus">YPO0246</name>
    <name type="ordered locus">y4028</name>
    <name type="ordered locus">YP_0245</name>
</gene>
<name>AROE_YERPE</name>
<feature type="chain" id="PRO_0000136056" description="Shikimate dehydrogenase (NADP(+))">
    <location>
        <begin position="1"/>
        <end position="273"/>
    </location>
</feature>
<feature type="active site" description="Proton acceptor" evidence="1">
    <location>
        <position position="66"/>
    </location>
</feature>
<feature type="binding site" evidence="1">
    <location>
        <begin position="15"/>
        <end position="17"/>
    </location>
    <ligand>
        <name>shikimate</name>
        <dbReference type="ChEBI" id="CHEBI:36208"/>
    </ligand>
</feature>
<feature type="binding site" evidence="1">
    <location>
        <position position="62"/>
    </location>
    <ligand>
        <name>shikimate</name>
        <dbReference type="ChEBI" id="CHEBI:36208"/>
    </ligand>
</feature>
<feature type="binding site" evidence="1">
    <location>
        <position position="78"/>
    </location>
    <ligand>
        <name>NADP(+)</name>
        <dbReference type="ChEBI" id="CHEBI:58349"/>
    </ligand>
</feature>
<feature type="binding site" evidence="1">
    <location>
        <position position="87"/>
    </location>
    <ligand>
        <name>shikimate</name>
        <dbReference type="ChEBI" id="CHEBI:36208"/>
    </ligand>
</feature>
<feature type="binding site" evidence="1">
    <location>
        <position position="103"/>
    </location>
    <ligand>
        <name>shikimate</name>
        <dbReference type="ChEBI" id="CHEBI:36208"/>
    </ligand>
</feature>
<feature type="binding site" evidence="1">
    <location>
        <begin position="127"/>
        <end position="131"/>
    </location>
    <ligand>
        <name>NADP(+)</name>
        <dbReference type="ChEBI" id="CHEBI:58349"/>
    </ligand>
</feature>
<feature type="binding site" evidence="1">
    <location>
        <begin position="150"/>
        <end position="155"/>
    </location>
    <ligand>
        <name>NADP(+)</name>
        <dbReference type="ChEBI" id="CHEBI:58349"/>
    </ligand>
</feature>
<feature type="binding site" evidence="1">
    <location>
        <position position="218"/>
    </location>
    <ligand>
        <name>NADP(+)</name>
        <dbReference type="ChEBI" id="CHEBI:58349"/>
    </ligand>
</feature>
<feature type="binding site" evidence="1">
    <location>
        <position position="238"/>
    </location>
    <ligand>
        <name>NADP(+)</name>
        <dbReference type="ChEBI" id="CHEBI:58349"/>
    </ligand>
</feature>
<keyword id="KW-0028">Amino-acid biosynthesis</keyword>
<keyword id="KW-0057">Aromatic amino acid biosynthesis</keyword>
<keyword id="KW-0521">NADP</keyword>
<keyword id="KW-0560">Oxidoreductase</keyword>
<keyword id="KW-1185">Reference proteome</keyword>
<comment type="function">
    <text evidence="1">Involved in the biosynthesis of the chorismate, which leads to the biosynthesis of aromatic amino acids. Catalyzes the reversible NADPH linked reduction of 3-dehydroshikimate (DHSA) to yield shikimate (SA).</text>
</comment>
<comment type="catalytic activity">
    <reaction evidence="1">
        <text>shikimate + NADP(+) = 3-dehydroshikimate + NADPH + H(+)</text>
        <dbReference type="Rhea" id="RHEA:17737"/>
        <dbReference type="ChEBI" id="CHEBI:15378"/>
        <dbReference type="ChEBI" id="CHEBI:16630"/>
        <dbReference type="ChEBI" id="CHEBI:36208"/>
        <dbReference type="ChEBI" id="CHEBI:57783"/>
        <dbReference type="ChEBI" id="CHEBI:58349"/>
        <dbReference type="EC" id="1.1.1.25"/>
    </reaction>
</comment>
<comment type="pathway">
    <text evidence="1">Metabolic intermediate biosynthesis; chorismate biosynthesis; chorismate from D-erythrose 4-phosphate and phosphoenolpyruvate: step 4/7.</text>
</comment>
<comment type="subunit">
    <text evidence="1">Homodimer.</text>
</comment>
<comment type="similarity">
    <text evidence="1">Belongs to the shikimate dehydrogenase family.</text>
</comment>
<reference key="1">
    <citation type="journal article" date="2001" name="Nature">
        <title>Genome sequence of Yersinia pestis, the causative agent of plague.</title>
        <authorList>
            <person name="Parkhill J."/>
            <person name="Wren B.W."/>
            <person name="Thomson N.R."/>
            <person name="Titball R.W."/>
            <person name="Holden M.T.G."/>
            <person name="Prentice M.B."/>
            <person name="Sebaihia M."/>
            <person name="James K.D."/>
            <person name="Churcher C.M."/>
            <person name="Mungall K.L."/>
            <person name="Baker S."/>
            <person name="Basham D."/>
            <person name="Bentley S.D."/>
            <person name="Brooks K."/>
            <person name="Cerdeno-Tarraga A.-M."/>
            <person name="Chillingworth T."/>
            <person name="Cronin A."/>
            <person name="Davies R.M."/>
            <person name="Davis P."/>
            <person name="Dougan G."/>
            <person name="Feltwell T."/>
            <person name="Hamlin N."/>
            <person name="Holroyd S."/>
            <person name="Jagels K."/>
            <person name="Karlyshev A.V."/>
            <person name="Leather S."/>
            <person name="Moule S."/>
            <person name="Oyston P.C.F."/>
            <person name="Quail M.A."/>
            <person name="Rutherford K.M."/>
            <person name="Simmonds M."/>
            <person name="Skelton J."/>
            <person name="Stevens K."/>
            <person name="Whitehead S."/>
            <person name="Barrell B.G."/>
        </authorList>
    </citation>
    <scope>NUCLEOTIDE SEQUENCE [LARGE SCALE GENOMIC DNA]</scope>
    <source>
        <strain>CO-92 / Biovar Orientalis</strain>
    </source>
</reference>
<reference key="2">
    <citation type="journal article" date="2002" name="J. Bacteriol.">
        <title>Genome sequence of Yersinia pestis KIM.</title>
        <authorList>
            <person name="Deng W."/>
            <person name="Burland V."/>
            <person name="Plunkett G. III"/>
            <person name="Boutin A."/>
            <person name="Mayhew G.F."/>
            <person name="Liss P."/>
            <person name="Perna N.T."/>
            <person name="Rose D.J."/>
            <person name="Mau B."/>
            <person name="Zhou S."/>
            <person name="Schwartz D.C."/>
            <person name="Fetherston J.D."/>
            <person name="Lindler L.E."/>
            <person name="Brubaker R.R."/>
            <person name="Plano G.V."/>
            <person name="Straley S.C."/>
            <person name="McDonough K.A."/>
            <person name="Nilles M.L."/>
            <person name="Matson J.S."/>
            <person name="Blattner F.R."/>
            <person name="Perry R.D."/>
        </authorList>
    </citation>
    <scope>NUCLEOTIDE SEQUENCE [LARGE SCALE GENOMIC DNA]</scope>
    <source>
        <strain>KIM10+ / Biovar Mediaevalis</strain>
    </source>
</reference>
<reference key="3">
    <citation type="journal article" date="2004" name="DNA Res.">
        <title>Complete genome sequence of Yersinia pestis strain 91001, an isolate avirulent to humans.</title>
        <authorList>
            <person name="Song Y."/>
            <person name="Tong Z."/>
            <person name="Wang J."/>
            <person name="Wang L."/>
            <person name="Guo Z."/>
            <person name="Han Y."/>
            <person name="Zhang J."/>
            <person name="Pei D."/>
            <person name="Zhou D."/>
            <person name="Qin H."/>
            <person name="Pang X."/>
            <person name="Han Y."/>
            <person name="Zhai J."/>
            <person name="Li M."/>
            <person name="Cui B."/>
            <person name="Qi Z."/>
            <person name="Jin L."/>
            <person name="Dai R."/>
            <person name="Chen F."/>
            <person name="Li S."/>
            <person name="Ye C."/>
            <person name="Du Z."/>
            <person name="Lin W."/>
            <person name="Wang J."/>
            <person name="Yu J."/>
            <person name="Yang H."/>
            <person name="Wang J."/>
            <person name="Huang P."/>
            <person name="Yang R."/>
        </authorList>
    </citation>
    <scope>NUCLEOTIDE SEQUENCE [LARGE SCALE GENOMIC DNA]</scope>
    <source>
        <strain>91001 / Biovar Mediaevalis</strain>
    </source>
</reference>
<evidence type="ECO:0000255" key="1">
    <source>
        <dbReference type="HAMAP-Rule" id="MF_00222"/>
    </source>
</evidence>
<protein>
    <recommendedName>
        <fullName evidence="1">Shikimate dehydrogenase (NADP(+))</fullName>
        <shortName evidence="1">SDH</shortName>
        <ecNumber evidence="1">1.1.1.25</ecNumber>
    </recommendedName>
</protein>
<proteinExistence type="inferred from homology"/>
<organism>
    <name type="scientific">Yersinia pestis</name>
    <dbReference type="NCBI Taxonomy" id="632"/>
    <lineage>
        <taxon>Bacteria</taxon>
        <taxon>Pseudomonadati</taxon>
        <taxon>Pseudomonadota</taxon>
        <taxon>Gammaproteobacteria</taxon>
        <taxon>Enterobacterales</taxon>
        <taxon>Yersiniaceae</taxon>
        <taxon>Yersinia</taxon>
    </lineage>
</organism>
<sequence>MDQKFAVFGNPISHSKSPRIHTLFSEQTGIEHRYGKVLAPSEAFENTLVSFFADGAQGANITTPFKERAYDQCDELTDRASLAGAVNTIKRLEDGRLLGDNTDGIGLLSDLERQNLIRTTDHILLVGAGGAARGVILPLLSYGCTVVVTNRTHTRAQQLAKVFNHIGDIDVCEMSELAGQRFDLVINATASGLHGEVPNLPAAILTSQTRCYDMFYQAGTTPFLAWAQRLGLADYADGLGMLVGQAAHAFKLWHGVMPEITPVLAQLRSELGK</sequence>